<accession>Q9X5P2</accession>
<name>OXYR_STRVD</name>
<evidence type="ECO:0000250" key="1"/>
<evidence type="ECO:0000255" key="2">
    <source>
        <dbReference type="PROSITE-ProRule" id="PRU00253"/>
    </source>
</evidence>
<evidence type="ECO:0000305" key="3"/>
<sequence>MRKRRRQPSLAQLRAFAAVAEHLHFRDAAAAIGMSQPALSGAVSALEESLGVTLLERTTRKVLLSPAGERLAARAKSVLAEVGALVEEADALQAPFTGVLRLGVIPTVAPYVLPTVLRLVHDRYPRLDLQVHEEQTASLLDGLTGGRLDLLLLAVPLGVPGVVELPLFDEDFVLVTPLEHGLGGREGIPRKALRELNLLLLDEGHCLRDQALDICREAGSAGVAATTTAAGLSTLVQLVAGGLGVTLLPHTAVQVETTRSGRLLTGRFADPAPGRRIALAMRTGAARAAEYEELAAALREAMRDLPVRIVRD</sequence>
<gene>
    <name type="primary">oxyR</name>
</gene>
<keyword id="KW-0010">Activator</keyword>
<keyword id="KW-0238">DNA-binding</keyword>
<keyword id="KW-0804">Transcription</keyword>
<keyword id="KW-0805">Transcription regulation</keyword>
<organism>
    <name type="scientific">Streptomyces viridosporus</name>
    <dbReference type="NCBI Taxonomy" id="67581"/>
    <lineage>
        <taxon>Bacteria</taxon>
        <taxon>Bacillati</taxon>
        <taxon>Actinomycetota</taxon>
        <taxon>Actinomycetes</taxon>
        <taxon>Kitasatosporales</taxon>
        <taxon>Streptomycetaceae</taxon>
        <taxon>Streptomyces</taxon>
    </lineage>
</organism>
<comment type="function">
    <text evidence="1">Required for the induction of a regulon of hydrogen peroxide inducible genes such as catalase and glutathione-reductase.</text>
</comment>
<comment type="similarity">
    <text evidence="3">Belongs to the LysR transcriptional regulatory family.</text>
</comment>
<feature type="chain" id="PRO_0000105738" description="Probable hydrogen peroxide-inducible genes activator">
    <location>
        <begin position="1"/>
        <end position="312"/>
    </location>
</feature>
<feature type="domain" description="HTH lysR-type" evidence="2">
    <location>
        <begin position="8"/>
        <end position="65"/>
    </location>
</feature>
<feature type="DNA-binding region" description="H-T-H motif" evidence="2">
    <location>
        <begin position="25"/>
        <end position="44"/>
    </location>
</feature>
<dbReference type="EMBL" id="AF127219">
    <property type="protein sequence ID" value="AAD25084.1"/>
    <property type="molecule type" value="mRNA"/>
</dbReference>
<dbReference type="SMR" id="Q9X5P2"/>
<dbReference type="GO" id="GO:0032993">
    <property type="term" value="C:protein-DNA complex"/>
    <property type="evidence" value="ECO:0007669"/>
    <property type="project" value="TreeGrafter"/>
</dbReference>
<dbReference type="GO" id="GO:0003677">
    <property type="term" value="F:DNA binding"/>
    <property type="evidence" value="ECO:0007669"/>
    <property type="project" value="UniProtKB-KW"/>
</dbReference>
<dbReference type="GO" id="GO:0003700">
    <property type="term" value="F:DNA-binding transcription factor activity"/>
    <property type="evidence" value="ECO:0007669"/>
    <property type="project" value="InterPro"/>
</dbReference>
<dbReference type="CDD" id="cd08411">
    <property type="entry name" value="PBP2_OxyR"/>
    <property type="match status" value="1"/>
</dbReference>
<dbReference type="FunFam" id="1.10.10.10:FF:000001">
    <property type="entry name" value="LysR family transcriptional regulator"/>
    <property type="match status" value="1"/>
</dbReference>
<dbReference type="Gene3D" id="3.40.190.10">
    <property type="entry name" value="Periplasmic binding protein-like II"/>
    <property type="match status" value="2"/>
</dbReference>
<dbReference type="Gene3D" id="1.10.10.10">
    <property type="entry name" value="Winged helix-like DNA-binding domain superfamily/Winged helix DNA-binding domain"/>
    <property type="match status" value="1"/>
</dbReference>
<dbReference type="InterPro" id="IPR005119">
    <property type="entry name" value="LysR_subst-bd"/>
</dbReference>
<dbReference type="InterPro" id="IPR000847">
    <property type="entry name" value="Tscrpt_reg_HTH_LysR"/>
</dbReference>
<dbReference type="InterPro" id="IPR036388">
    <property type="entry name" value="WH-like_DNA-bd_sf"/>
</dbReference>
<dbReference type="InterPro" id="IPR036390">
    <property type="entry name" value="WH_DNA-bd_sf"/>
</dbReference>
<dbReference type="PANTHER" id="PTHR30346:SF26">
    <property type="entry name" value="HYDROGEN PEROXIDE-INDUCIBLE GENES ACTIVATOR"/>
    <property type="match status" value="1"/>
</dbReference>
<dbReference type="PANTHER" id="PTHR30346">
    <property type="entry name" value="TRANSCRIPTIONAL DUAL REGULATOR HCAR-RELATED"/>
    <property type="match status" value="1"/>
</dbReference>
<dbReference type="Pfam" id="PF00126">
    <property type="entry name" value="HTH_1"/>
    <property type="match status" value="1"/>
</dbReference>
<dbReference type="Pfam" id="PF03466">
    <property type="entry name" value="LysR_substrate"/>
    <property type="match status" value="1"/>
</dbReference>
<dbReference type="PRINTS" id="PR00039">
    <property type="entry name" value="HTHLYSR"/>
</dbReference>
<dbReference type="SUPFAM" id="SSF53850">
    <property type="entry name" value="Periplasmic binding protein-like II"/>
    <property type="match status" value="1"/>
</dbReference>
<dbReference type="SUPFAM" id="SSF46785">
    <property type="entry name" value="Winged helix' DNA-binding domain"/>
    <property type="match status" value="1"/>
</dbReference>
<dbReference type="PROSITE" id="PS50931">
    <property type="entry name" value="HTH_LYSR"/>
    <property type="match status" value="1"/>
</dbReference>
<protein>
    <recommendedName>
        <fullName>Probable hydrogen peroxide-inducible genes activator</fullName>
    </recommendedName>
</protein>
<reference key="1">
    <citation type="submission" date="1999-02" db="EMBL/GenBank/DDBJ databases">
        <title>Genetic organization and sequence analysis of three peroxide induced regulatory genes oxyR, ahpC and ahpX in Streptomyces viridosporus T7A, a lignocellulose degrading organism.</title>
        <authorList>
            <person name="Ramachandran S."/>
            <person name="Crawford D.L."/>
        </authorList>
    </citation>
    <scope>NUCLEOTIDE SEQUENCE [MRNA]</scope>
    <source>
        <strain>T7A</strain>
    </source>
</reference>
<proteinExistence type="evidence at transcript level"/>